<comment type="function">
    <text evidence="1">Participates actively in the response to hyperosmotic and heat shock by preventing the aggregation of stress-denatured proteins and by disaggregating proteins, also in an autonomous, DnaK-independent fashion. Unfolded proteins bind initially to DnaJ; upon interaction with the DnaJ-bound protein, DnaK hydrolyzes its bound ATP, resulting in the formation of a stable complex. GrpE releases ADP from DnaK; ATP binding to DnaK triggers the release of the substrate protein, thus completing the reaction cycle. Several rounds of ATP-dependent interactions between DnaJ, DnaK and GrpE are required for fully efficient folding. Also involved, together with DnaK and GrpE, in the DNA replication of plasmids through activation of initiation proteins.</text>
</comment>
<comment type="cofactor">
    <cofactor evidence="1">
        <name>Zn(2+)</name>
        <dbReference type="ChEBI" id="CHEBI:29105"/>
    </cofactor>
    <text evidence="1">Binds 2 Zn(2+) ions per monomer.</text>
</comment>
<comment type="subunit">
    <text evidence="1">Homodimer.</text>
</comment>
<comment type="subcellular location">
    <subcellularLocation>
        <location evidence="1">Cytoplasm</location>
    </subcellularLocation>
</comment>
<comment type="domain">
    <text evidence="1">The J domain is necessary and sufficient to stimulate DnaK ATPase activity. Zinc center 1 plays an important role in the autonomous, DnaK-independent chaperone activity of DnaJ. Zinc center 2 is essential for interaction with DnaK and for DnaJ activity.</text>
</comment>
<comment type="similarity">
    <text evidence="1">Belongs to the DnaJ family.</text>
</comment>
<accession>Q823T2</accession>
<name>DNAJ_CHLCV</name>
<sequence>MDYYDVLGVSKTASPEEIKKSYRKLAVKYHPDKNPGDAEAEKRFKEVSEAYEVLSDPQKRESYDRYGKNGPFAGAGGFGGMGGMGNMEDALRTFMGAFGGEFGGGGSFFEGLFGGLGEAFGMRGDPAGARQGASKKVHITLTFEEAARGVEKELLVSGYKTCETCLGSGAASEQGIKCCDRCKGSGQIVQSRGFFSMASTCPECGGEGRVITDPCSNCRGQGRIKDKRNVHVQIPAGVDSGMRLKMEGYGDAGQNGAPSGDLYVFIDVEAHPVFERRGDDLILELPIGFVDAALGMKKEIPTLLKEGMCRLTVPEGIQSGTILKVKNQGFPNVHGRGRGDLLVRVSVETPQNLSEEQKELLRKFATTEKAENFPKKRGFLDKIKGFFSDFAV</sequence>
<reference key="1">
    <citation type="journal article" date="2003" name="Nucleic Acids Res.">
        <title>Genome sequence of Chlamydophila caviae (Chlamydia psittaci GPIC): examining the role of niche-specific genes in the evolution of the Chlamydiaceae.</title>
        <authorList>
            <person name="Read T.D."/>
            <person name="Myers G.S.A."/>
            <person name="Brunham R.C."/>
            <person name="Nelson W.C."/>
            <person name="Paulsen I.T."/>
            <person name="Heidelberg J.F."/>
            <person name="Holtzapple E.K."/>
            <person name="Khouri H.M."/>
            <person name="Federova N.B."/>
            <person name="Carty H.A."/>
            <person name="Umayam L.A."/>
            <person name="Haft D.H."/>
            <person name="Peterson J.D."/>
            <person name="Beanan M.J."/>
            <person name="White O."/>
            <person name="Salzberg S.L."/>
            <person name="Hsia R.-C."/>
            <person name="McClarty G."/>
            <person name="Rank R.G."/>
            <person name="Bavoil P.M."/>
            <person name="Fraser C.M."/>
        </authorList>
    </citation>
    <scope>NUCLEOTIDE SEQUENCE [LARGE SCALE GENOMIC DNA]</scope>
    <source>
        <strain>ATCC VR-813 / DSM 19441 / 03DC25 / GPIC</strain>
    </source>
</reference>
<keyword id="KW-0143">Chaperone</keyword>
<keyword id="KW-0963">Cytoplasm</keyword>
<keyword id="KW-0235">DNA replication</keyword>
<keyword id="KW-0479">Metal-binding</keyword>
<keyword id="KW-0677">Repeat</keyword>
<keyword id="KW-0346">Stress response</keyword>
<keyword id="KW-0862">Zinc</keyword>
<keyword id="KW-0863">Zinc-finger</keyword>
<gene>
    <name evidence="1" type="primary">dnaJ</name>
    <name type="ordered locus">CCA_00323</name>
</gene>
<dbReference type="EMBL" id="AE015925">
    <property type="protein sequence ID" value="AAP05072.1"/>
    <property type="molecule type" value="Genomic_DNA"/>
</dbReference>
<dbReference type="RefSeq" id="WP_011006289.1">
    <property type="nucleotide sequence ID" value="NC_003361.3"/>
</dbReference>
<dbReference type="SMR" id="Q823T2"/>
<dbReference type="STRING" id="227941.CCA_00323"/>
<dbReference type="KEGG" id="cca:CCA_00323"/>
<dbReference type="eggNOG" id="COG0484">
    <property type="taxonomic scope" value="Bacteria"/>
</dbReference>
<dbReference type="HOGENOM" id="CLU_017633_0_7_0"/>
<dbReference type="OrthoDB" id="9779889at2"/>
<dbReference type="Proteomes" id="UP000002193">
    <property type="component" value="Chromosome"/>
</dbReference>
<dbReference type="GO" id="GO:0005737">
    <property type="term" value="C:cytoplasm"/>
    <property type="evidence" value="ECO:0007669"/>
    <property type="project" value="UniProtKB-SubCell"/>
</dbReference>
<dbReference type="GO" id="GO:0005524">
    <property type="term" value="F:ATP binding"/>
    <property type="evidence" value="ECO:0007669"/>
    <property type="project" value="InterPro"/>
</dbReference>
<dbReference type="GO" id="GO:0031072">
    <property type="term" value="F:heat shock protein binding"/>
    <property type="evidence" value="ECO:0007669"/>
    <property type="project" value="InterPro"/>
</dbReference>
<dbReference type="GO" id="GO:0051082">
    <property type="term" value="F:unfolded protein binding"/>
    <property type="evidence" value="ECO:0007669"/>
    <property type="project" value="UniProtKB-UniRule"/>
</dbReference>
<dbReference type="GO" id="GO:0008270">
    <property type="term" value="F:zinc ion binding"/>
    <property type="evidence" value="ECO:0007669"/>
    <property type="project" value="UniProtKB-UniRule"/>
</dbReference>
<dbReference type="GO" id="GO:0051085">
    <property type="term" value="P:chaperone cofactor-dependent protein refolding"/>
    <property type="evidence" value="ECO:0007669"/>
    <property type="project" value="TreeGrafter"/>
</dbReference>
<dbReference type="GO" id="GO:0006260">
    <property type="term" value="P:DNA replication"/>
    <property type="evidence" value="ECO:0007669"/>
    <property type="project" value="UniProtKB-KW"/>
</dbReference>
<dbReference type="GO" id="GO:0042026">
    <property type="term" value="P:protein refolding"/>
    <property type="evidence" value="ECO:0007669"/>
    <property type="project" value="TreeGrafter"/>
</dbReference>
<dbReference type="GO" id="GO:0009408">
    <property type="term" value="P:response to heat"/>
    <property type="evidence" value="ECO:0007669"/>
    <property type="project" value="InterPro"/>
</dbReference>
<dbReference type="CDD" id="cd06257">
    <property type="entry name" value="DnaJ"/>
    <property type="match status" value="1"/>
</dbReference>
<dbReference type="CDD" id="cd10747">
    <property type="entry name" value="DnaJ_C"/>
    <property type="match status" value="1"/>
</dbReference>
<dbReference type="CDD" id="cd10719">
    <property type="entry name" value="DnaJ_zf"/>
    <property type="match status" value="1"/>
</dbReference>
<dbReference type="FunFam" id="1.10.287.110:FF:000034">
    <property type="entry name" value="Chaperone protein DnaJ"/>
    <property type="match status" value="1"/>
</dbReference>
<dbReference type="FunFam" id="2.60.260.20:FF:000005">
    <property type="entry name" value="Chaperone protein dnaJ 1, mitochondrial"/>
    <property type="match status" value="1"/>
</dbReference>
<dbReference type="FunFam" id="2.10.230.10:FF:000002">
    <property type="entry name" value="Molecular chaperone DnaJ"/>
    <property type="match status" value="1"/>
</dbReference>
<dbReference type="Gene3D" id="1.10.287.110">
    <property type="entry name" value="DnaJ domain"/>
    <property type="match status" value="1"/>
</dbReference>
<dbReference type="Gene3D" id="2.10.230.10">
    <property type="entry name" value="Heat shock protein DnaJ, cysteine-rich domain"/>
    <property type="match status" value="1"/>
</dbReference>
<dbReference type="Gene3D" id="2.60.260.20">
    <property type="entry name" value="Urease metallochaperone UreE, N-terminal domain"/>
    <property type="match status" value="2"/>
</dbReference>
<dbReference type="HAMAP" id="MF_01152">
    <property type="entry name" value="DnaJ"/>
    <property type="match status" value="1"/>
</dbReference>
<dbReference type="InterPro" id="IPR012724">
    <property type="entry name" value="DnaJ"/>
</dbReference>
<dbReference type="InterPro" id="IPR002939">
    <property type="entry name" value="DnaJ_C"/>
</dbReference>
<dbReference type="InterPro" id="IPR001623">
    <property type="entry name" value="DnaJ_domain"/>
</dbReference>
<dbReference type="InterPro" id="IPR018253">
    <property type="entry name" value="DnaJ_domain_CS"/>
</dbReference>
<dbReference type="InterPro" id="IPR008971">
    <property type="entry name" value="HSP40/DnaJ_pept-bd"/>
</dbReference>
<dbReference type="InterPro" id="IPR001305">
    <property type="entry name" value="HSP_DnaJ_Cys-rich_dom"/>
</dbReference>
<dbReference type="InterPro" id="IPR036410">
    <property type="entry name" value="HSP_DnaJ_Cys-rich_dom_sf"/>
</dbReference>
<dbReference type="InterPro" id="IPR036869">
    <property type="entry name" value="J_dom_sf"/>
</dbReference>
<dbReference type="NCBIfam" id="TIGR02349">
    <property type="entry name" value="DnaJ_bact"/>
    <property type="match status" value="1"/>
</dbReference>
<dbReference type="NCBIfam" id="NF008035">
    <property type="entry name" value="PRK10767.1"/>
    <property type="match status" value="1"/>
</dbReference>
<dbReference type="NCBIfam" id="NF010877">
    <property type="entry name" value="PRK14284.1"/>
    <property type="match status" value="1"/>
</dbReference>
<dbReference type="PANTHER" id="PTHR43096:SF48">
    <property type="entry name" value="CHAPERONE PROTEIN DNAJ"/>
    <property type="match status" value="1"/>
</dbReference>
<dbReference type="PANTHER" id="PTHR43096">
    <property type="entry name" value="DNAJ HOMOLOG 1, MITOCHONDRIAL-RELATED"/>
    <property type="match status" value="1"/>
</dbReference>
<dbReference type="Pfam" id="PF00226">
    <property type="entry name" value="DnaJ"/>
    <property type="match status" value="1"/>
</dbReference>
<dbReference type="Pfam" id="PF01556">
    <property type="entry name" value="DnaJ_C"/>
    <property type="match status" value="1"/>
</dbReference>
<dbReference type="Pfam" id="PF00684">
    <property type="entry name" value="DnaJ_CXXCXGXG"/>
    <property type="match status" value="1"/>
</dbReference>
<dbReference type="PRINTS" id="PR00625">
    <property type="entry name" value="JDOMAIN"/>
</dbReference>
<dbReference type="SMART" id="SM00271">
    <property type="entry name" value="DnaJ"/>
    <property type="match status" value="1"/>
</dbReference>
<dbReference type="SUPFAM" id="SSF46565">
    <property type="entry name" value="Chaperone J-domain"/>
    <property type="match status" value="1"/>
</dbReference>
<dbReference type="SUPFAM" id="SSF57938">
    <property type="entry name" value="DnaJ/Hsp40 cysteine-rich domain"/>
    <property type="match status" value="1"/>
</dbReference>
<dbReference type="SUPFAM" id="SSF49493">
    <property type="entry name" value="HSP40/DnaJ peptide-binding domain"/>
    <property type="match status" value="2"/>
</dbReference>
<dbReference type="PROSITE" id="PS00636">
    <property type="entry name" value="DNAJ_1"/>
    <property type="match status" value="1"/>
</dbReference>
<dbReference type="PROSITE" id="PS50076">
    <property type="entry name" value="DNAJ_2"/>
    <property type="match status" value="1"/>
</dbReference>
<dbReference type="PROSITE" id="PS51188">
    <property type="entry name" value="ZF_CR"/>
    <property type="match status" value="1"/>
</dbReference>
<feature type="chain" id="PRO_0000070756" description="Chaperone protein DnaJ">
    <location>
        <begin position="1"/>
        <end position="392"/>
    </location>
</feature>
<feature type="domain" description="J" evidence="1">
    <location>
        <begin position="2"/>
        <end position="67"/>
    </location>
</feature>
<feature type="repeat" description="CXXCXGXG motif">
    <location>
        <begin position="162"/>
        <end position="169"/>
    </location>
</feature>
<feature type="repeat" description="CXXCXGXG motif">
    <location>
        <begin position="179"/>
        <end position="186"/>
    </location>
</feature>
<feature type="repeat" description="CXXCXGXG motif">
    <location>
        <begin position="201"/>
        <end position="208"/>
    </location>
</feature>
<feature type="repeat" description="CXXCXGXG motif">
    <location>
        <begin position="215"/>
        <end position="222"/>
    </location>
</feature>
<feature type="zinc finger region" description="CR-type" evidence="1">
    <location>
        <begin position="149"/>
        <end position="227"/>
    </location>
</feature>
<feature type="binding site" evidence="1">
    <location>
        <position position="162"/>
    </location>
    <ligand>
        <name>Zn(2+)</name>
        <dbReference type="ChEBI" id="CHEBI:29105"/>
        <label>1</label>
    </ligand>
</feature>
<feature type="binding site" evidence="1">
    <location>
        <position position="165"/>
    </location>
    <ligand>
        <name>Zn(2+)</name>
        <dbReference type="ChEBI" id="CHEBI:29105"/>
        <label>1</label>
    </ligand>
</feature>
<feature type="binding site" evidence="1">
    <location>
        <position position="179"/>
    </location>
    <ligand>
        <name>Zn(2+)</name>
        <dbReference type="ChEBI" id="CHEBI:29105"/>
        <label>2</label>
    </ligand>
</feature>
<feature type="binding site" evidence="1">
    <location>
        <position position="182"/>
    </location>
    <ligand>
        <name>Zn(2+)</name>
        <dbReference type="ChEBI" id="CHEBI:29105"/>
        <label>2</label>
    </ligand>
</feature>
<feature type="binding site" evidence="1">
    <location>
        <position position="201"/>
    </location>
    <ligand>
        <name>Zn(2+)</name>
        <dbReference type="ChEBI" id="CHEBI:29105"/>
        <label>2</label>
    </ligand>
</feature>
<feature type="binding site" evidence="1">
    <location>
        <position position="204"/>
    </location>
    <ligand>
        <name>Zn(2+)</name>
        <dbReference type="ChEBI" id="CHEBI:29105"/>
        <label>2</label>
    </ligand>
</feature>
<feature type="binding site" evidence="1">
    <location>
        <position position="215"/>
    </location>
    <ligand>
        <name>Zn(2+)</name>
        <dbReference type="ChEBI" id="CHEBI:29105"/>
        <label>1</label>
    </ligand>
</feature>
<feature type="binding site" evidence="1">
    <location>
        <position position="218"/>
    </location>
    <ligand>
        <name>Zn(2+)</name>
        <dbReference type="ChEBI" id="CHEBI:29105"/>
        <label>1</label>
    </ligand>
</feature>
<evidence type="ECO:0000255" key="1">
    <source>
        <dbReference type="HAMAP-Rule" id="MF_01152"/>
    </source>
</evidence>
<organism>
    <name type="scientific">Chlamydia caviae (strain ATCC VR-813 / DSM 19441 / 03DC25 / GPIC)</name>
    <name type="common">Chlamydophila caviae</name>
    <dbReference type="NCBI Taxonomy" id="227941"/>
    <lineage>
        <taxon>Bacteria</taxon>
        <taxon>Pseudomonadati</taxon>
        <taxon>Chlamydiota</taxon>
        <taxon>Chlamydiia</taxon>
        <taxon>Chlamydiales</taxon>
        <taxon>Chlamydiaceae</taxon>
        <taxon>Chlamydia/Chlamydophila group</taxon>
        <taxon>Chlamydia</taxon>
    </lineage>
</organism>
<proteinExistence type="inferred from homology"/>
<protein>
    <recommendedName>
        <fullName evidence="1">Chaperone protein DnaJ</fullName>
    </recommendedName>
</protein>